<name>MDH_ACICJ</name>
<accession>A5G320</accession>
<dbReference type="EC" id="1.1.1.37" evidence="1"/>
<dbReference type="EMBL" id="CP000697">
    <property type="protein sequence ID" value="ABQ32252.1"/>
    <property type="molecule type" value="Genomic_DNA"/>
</dbReference>
<dbReference type="RefSeq" id="WP_007422513.1">
    <property type="nucleotide sequence ID" value="NC_009484.1"/>
</dbReference>
<dbReference type="SMR" id="A5G320"/>
<dbReference type="STRING" id="349163.Acry_3063"/>
<dbReference type="KEGG" id="acr:Acry_3063"/>
<dbReference type="eggNOG" id="COG0039">
    <property type="taxonomic scope" value="Bacteria"/>
</dbReference>
<dbReference type="HOGENOM" id="CLU_040727_2_0_5"/>
<dbReference type="Proteomes" id="UP000000245">
    <property type="component" value="Chromosome"/>
</dbReference>
<dbReference type="GO" id="GO:0030060">
    <property type="term" value="F:L-malate dehydrogenase (NAD+) activity"/>
    <property type="evidence" value="ECO:0007669"/>
    <property type="project" value="UniProtKB-UniRule"/>
</dbReference>
<dbReference type="GO" id="GO:0006108">
    <property type="term" value="P:malate metabolic process"/>
    <property type="evidence" value="ECO:0007669"/>
    <property type="project" value="InterPro"/>
</dbReference>
<dbReference type="GO" id="GO:0006099">
    <property type="term" value="P:tricarboxylic acid cycle"/>
    <property type="evidence" value="ECO:0007669"/>
    <property type="project" value="UniProtKB-UniRule"/>
</dbReference>
<dbReference type="CDD" id="cd01338">
    <property type="entry name" value="MDH_chloroplast-like"/>
    <property type="match status" value="1"/>
</dbReference>
<dbReference type="FunFam" id="3.40.50.720:FF:000010">
    <property type="entry name" value="Malate dehydrogenase"/>
    <property type="match status" value="1"/>
</dbReference>
<dbReference type="FunFam" id="3.90.110.10:FF:000002">
    <property type="entry name" value="Malate dehydrogenase"/>
    <property type="match status" value="1"/>
</dbReference>
<dbReference type="Gene3D" id="3.90.110.10">
    <property type="entry name" value="Lactate dehydrogenase/glycoside hydrolase, family 4, C-terminal"/>
    <property type="match status" value="1"/>
</dbReference>
<dbReference type="Gene3D" id="3.40.50.720">
    <property type="entry name" value="NAD(P)-binding Rossmann-like Domain"/>
    <property type="match status" value="1"/>
</dbReference>
<dbReference type="HAMAP" id="MF_01517">
    <property type="entry name" value="Malate_dehydrog_2"/>
    <property type="match status" value="1"/>
</dbReference>
<dbReference type="InterPro" id="IPR001557">
    <property type="entry name" value="L-lactate/malate_DH"/>
</dbReference>
<dbReference type="InterPro" id="IPR022383">
    <property type="entry name" value="Lactate/malate_DH_C"/>
</dbReference>
<dbReference type="InterPro" id="IPR001236">
    <property type="entry name" value="Lactate/malate_DH_N"/>
</dbReference>
<dbReference type="InterPro" id="IPR015955">
    <property type="entry name" value="Lactate_DH/Glyco_Ohase_4_C"/>
</dbReference>
<dbReference type="InterPro" id="IPR010945">
    <property type="entry name" value="Malate_DH_type2"/>
</dbReference>
<dbReference type="InterPro" id="IPR036291">
    <property type="entry name" value="NAD(P)-bd_dom_sf"/>
</dbReference>
<dbReference type="NCBIfam" id="TIGR01759">
    <property type="entry name" value="MalateDH-SF1"/>
    <property type="match status" value="1"/>
</dbReference>
<dbReference type="NCBIfam" id="NF003916">
    <property type="entry name" value="PRK05442.1"/>
    <property type="match status" value="1"/>
</dbReference>
<dbReference type="PANTHER" id="PTHR23382">
    <property type="entry name" value="MALATE DEHYDROGENASE"/>
    <property type="match status" value="1"/>
</dbReference>
<dbReference type="Pfam" id="PF02866">
    <property type="entry name" value="Ldh_1_C"/>
    <property type="match status" value="1"/>
</dbReference>
<dbReference type="Pfam" id="PF00056">
    <property type="entry name" value="Ldh_1_N"/>
    <property type="match status" value="1"/>
</dbReference>
<dbReference type="PIRSF" id="PIRSF000102">
    <property type="entry name" value="Lac_mal_DH"/>
    <property type="match status" value="1"/>
</dbReference>
<dbReference type="SUPFAM" id="SSF56327">
    <property type="entry name" value="LDH C-terminal domain-like"/>
    <property type="match status" value="1"/>
</dbReference>
<dbReference type="SUPFAM" id="SSF51735">
    <property type="entry name" value="NAD(P)-binding Rossmann-fold domains"/>
    <property type="match status" value="1"/>
</dbReference>
<keyword id="KW-0520">NAD</keyword>
<keyword id="KW-0560">Oxidoreductase</keyword>
<keyword id="KW-1185">Reference proteome</keyword>
<keyword id="KW-0816">Tricarboxylic acid cycle</keyword>
<sequence length="327" mass="34474">MAKSPVRIAVTGAAGQIAYALVFRIASGALLGPDQPVILHLLDLPQMQGALGGVMMELEDCAFPLLAGMVATDDPKVAFKDIDIGFLVGARPRGKGMERKDLLGANAEIFTVQGRALNEVAKRSARVLVVGNPANTNAYIAMKSAPDLSPDCFSAMIRLDHNRAASMLAAKAGVNVGDVGKLIVWGNHSPTMYPDYRFAEAGGRKLAEAINDEAWNRDVFIPTVGKRGAAVIEARGASSAASAANAAIDQVRDWVVGSDGRWVSMAIPSDGSYGIPEGIMFGVPVTTQGGVVTRVPNLAIDAFAQSRLDITLNELKEEREAIAHLLA</sequence>
<reference key="1">
    <citation type="submission" date="2007-05" db="EMBL/GenBank/DDBJ databases">
        <title>Complete sequence of chromosome of Acidiphilium cryptum JF-5.</title>
        <authorList>
            <consortium name="US DOE Joint Genome Institute"/>
            <person name="Copeland A."/>
            <person name="Lucas S."/>
            <person name="Lapidus A."/>
            <person name="Barry K."/>
            <person name="Detter J.C."/>
            <person name="Glavina del Rio T."/>
            <person name="Hammon N."/>
            <person name="Israni S."/>
            <person name="Dalin E."/>
            <person name="Tice H."/>
            <person name="Pitluck S."/>
            <person name="Sims D."/>
            <person name="Brettin T."/>
            <person name="Bruce D."/>
            <person name="Han C."/>
            <person name="Schmutz J."/>
            <person name="Larimer F."/>
            <person name="Land M."/>
            <person name="Hauser L."/>
            <person name="Kyrpides N."/>
            <person name="Kim E."/>
            <person name="Magnuson T."/>
            <person name="Richardson P."/>
        </authorList>
    </citation>
    <scope>NUCLEOTIDE SEQUENCE [LARGE SCALE GENOMIC DNA]</scope>
    <source>
        <strain>JF-5</strain>
    </source>
</reference>
<protein>
    <recommendedName>
        <fullName evidence="1">Malate dehydrogenase</fullName>
        <ecNumber evidence="1">1.1.1.37</ecNumber>
    </recommendedName>
</protein>
<organism>
    <name type="scientific">Acidiphilium cryptum (strain JF-5)</name>
    <dbReference type="NCBI Taxonomy" id="349163"/>
    <lineage>
        <taxon>Bacteria</taxon>
        <taxon>Pseudomonadati</taxon>
        <taxon>Pseudomonadota</taxon>
        <taxon>Alphaproteobacteria</taxon>
        <taxon>Acetobacterales</taxon>
        <taxon>Acidocellaceae</taxon>
        <taxon>Acidiphilium</taxon>
    </lineage>
</organism>
<evidence type="ECO:0000255" key="1">
    <source>
        <dbReference type="HAMAP-Rule" id="MF_01517"/>
    </source>
</evidence>
<comment type="function">
    <text evidence="1">Catalyzes the reversible oxidation of malate to oxaloacetate.</text>
</comment>
<comment type="catalytic activity">
    <reaction evidence="1">
        <text>(S)-malate + NAD(+) = oxaloacetate + NADH + H(+)</text>
        <dbReference type="Rhea" id="RHEA:21432"/>
        <dbReference type="ChEBI" id="CHEBI:15378"/>
        <dbReference type="ChEBI" id="CHEBI:15589"/>
        <dbReference type="ChEBI" id="CHEBI:16452"/>
        <dbReference type="ChEBI" id="CHEBI:57540"/>
        <dbReference type="ChEBI" id="CHEBI:57945"/>
        <dbReference type="EC" id="1.1.1.37"/>
    </reaction>
</comment>
<comment type="similarity">
    <text evidence="1">Belongs to the LDH/MDH superfamily. MDH type 2 family.</text>
</comment>
<feature type="chain" id="PRO_1000068598" description="Malate dehydrogenase">
    <location>
        <begin position="1"/>
        <end position="327"/>
    </location>
</feature>
<feature type="active site" description="Proton acceptor" evidence="1">
    <location>
        <position position="188"/>
    </location>
</feature>
<feature type="binding site" evidence="1">
    <location>
        <begin position="12"/>
        <end position="18"/>
    </location>
    <ligand>
        <name>NAD(+)</name>
        <dbReference type="ChEBI" id="CHEBI:57540"/>
    </ligand>
</feature>
<feature type="binding site" evidence="1">
    <location>
        <position position="93"/>
    </location>
    <ligand>
        <name>substrate</name>
    </ligand>
</feature>
<feature type="binding site" evidence="1">
    <location>
        <position position="99"/>
    </location>
    <ligand>
        <name>substrate</name>
    </ligand>
</feature>
<feature type="binding site" evidence="1">
    <location>
        <position position="106"/>
    </location>
    <ligand>
        <name>NAD(+)</name>
        <dbReference type="ChEBI" id="CHEBI:57540"/>
    </ligand>
</feature>
<feature type="binding site" evidence="1">
    <location>
        <position position="113"/>
    </location>
    <ligand>
        <name>NAD(+)</name>
        <dbReference type="ChEBI" id="CHEBI:57540"/>
    </ligand>
</feature>
<feature type="binding site" evidence="1">
    <location>
        <begin position="130"/>
        <end position="132"/>
    </location>
    <ligand>
        <name>NAD(+)</name>
        <dbReference type="ChEBI" id="CHEBI:57540"/>
    </ligand>
</feature>
<feature type="binding site" evidence="1">
    <location>
        <position position="132"/>
    </location>
    <ligand>
        <name>substrate</name>
    </ligand>
</feature>
<feature type="binding site" evidence="1">
    <location>
        <position position="163"/>
    </location>
    <ligand>
        <name>substrate</name>
    </ligand>
</feature>
<gene>
    <name evidence="1" type="primary">mdh</name>
    <name type="ordered locus">Acry_3063</name>
</gene>
<proteinExistence type="inferred from homology"/>